<evidence type="ECO:0000255" key="1">
    <source>
        <dbReference type="HAMAP-Rule" id="MF_01315"/>
    </source>
</evidence>
<evidence type="ECO:0000256" key="2">
    <source>
        <dbReference type="SAM" id="MobiDB-lite"/>
    </source>
</evidence>
<evidence type="ECO:0000305" key="3"/>
<accession>A1AGI9</accession>
<reference key="1">
    <citation type="journal article" date="2007" name="J. Bacteriol.">
        <title>The genome sequence of avian pathogenic Escherichia coli strain O1:K1:H7 shares strong similarities with human extraintestinal pathogenic E. coli genomes.</title>
        <authorList>
            <person name="Johnson T.J."/>
            <person name="Kariyawasam S."/>
            <person name="Wannemuehler Y."/>
            <person name="Mangiamele P."/>
            <person name="Johnson S.J."/>
            <person name="Doetkott C."/>
            <person name="Skyberg J.A."/>
            <person name="Lynne A.M."/>
            <person name="Johnson J.R."/>
            <person name="Nolan L.K."/>
        </authorList>
    </citation>
    <scope>NUCLEOTIDE SEQUENCE [LARGE SCALE GENOMIC DNA]</scope>
</reference>
<name>RS13_ECOK1</name>
<feature type="chain" id="PRO_0000306601" description="Small ribosomal subunit protein uS13">
    <location>
        <begin position="1"/>
        <end position="118"/>
    </location>
</feature>
<feature type="region of interest" description="Disordered" evidence="2">
    <location>
        <begin position="94"/>
        <end position="118"/>
    </location>
</feature>
<protein>
    <recommendedName>
        <fullName evidence="1">Small ribosomal subunit protein uS13</fullName>
    </recommendedName>
    <alternativeName>
        <fullName evidence="3">30S ribosomal protein S13</fullName>
    </alternativeName>
</protein>
<proteinExistence type="inferred from homology"/>
<comment type="function">
    <text evidence="1">Located at the top of the head of the 30S subunit, it contacts several helices of the 16S rRNA. In the 70S ribosome it contacts the 23S rRNA (bridge B1a) and protein L5 of the 50S subunit (bridge B1b), connecting the 2 subunits; these bridges are implicated in subunit movement. Contacts the tRNAs in the A and P-sites.</text>
</comment>
<comment type="subunit">
    <text evidence="1">Part of the 30S ribosomal subunit. Forms a loose heterodimer with protein S19. Forms two bridges to the 50S subunit in the 70S ribosome.</text>
</comment>
<comment type="similarity">
    <text evidence="1">Belongs to the universal ribosomal protein uS13 family.</text>
</comment>
<dbReference type="EMBL" id="CP000468">
    <property type="protein sequence ID" value="ABJ02779.1"/>
    <property type="molecule type" value="Genomic_DNA"/>
</dbReference>
<dbReference type="RefSeq" id="WP_000090775.1">
    <property type="nucleotide sequence ID" value="NZ_CADILS010000044.1"/>
</dbReference>
<dbReference type="SMR" id="A1AGI9"/>
<dbReference type="GeneID" id="93778689"/>
<dbReference type="KEGG" id="ecv:APECO1_3149"/>
<dbReference type="HOGENOM" id="CLU_103849_1_2_6"/>
<dbReference type="Proteomes" id="UP000008216">
    <property type="component" value="Chromosome"/>
</dbReference>
<dbReference type="GO" id="GO:0005829">
    <property type="term" value="C:cytosol"/>
    <property type="evidence" value="ECO:0007669"/>
    <property type="project" value="TreeGrafter"/>
</dbReference>
<dbReference type="GO" id="GO:0015935">
    <property type="term" value="C:small ribosomal subunit"/>
    <property type="evidence" value="ECO:0007669"/>
    <property type="project" value="TreeGrafter"/>
</dbReference>
<dbReference type="GO" id="GO:0019843">
    <property type="term" value="F:rRNA binding"/>
    <property type="evidence" value="ECO:0007669"/>
    <property type="project" value="UniProtKB-UniRule"/>
</dbReference>
<dbReference type="GO" id="GO:0003735">
    <property type="term" value="F:structural constituent of ribosome"/>
    <property type="evidence" value="ECO:0007669"/>
    <property type="project" value="InterPro"/>
</dbReference>
<dbReference type="GO" id="GO:0000049">
    <property type="term" value="F:tRNA binding"/>
    <property type="evidence" value="ECO:0007669"/>
    <property type="project" value="UniProtKB-UniRule"/>
</dbReference>
<dbReference type="GO" id="GO:0006412">
    <property type="term" value="P:translation"/>
    <property type="evidence" value="ECO:0007669"/>
    <property type="project" value="UniProtKB-UniRule"/>
</dbReference>
<dbReference type="FunFam" id="1.10.8.50:FF:000001">
    <property type="entry name" value="30S ribosomal protein S13"/>
    <property type="match status" value="1"/>
</dbReference>
<dbReference type="FunFam" id="4.10.910.10:FF:000001">
    <property type="entry name" value="30S ribosomal protein S13"/>
    <property type="match status" value="1"/>
</dbReference>
<dbReference type="Gene3D" id="1.10.8.50">
    <property type="match status" value="1"/>
</dbReference>
<dbReference type="Gene3D" id="4.10.910.10">
    <property type="entry name" value="30s ribosomal protein s13, domain 2"/>
    <property type="match status" value="1"/>
</dbReference>
<dbReference type="HAMAP" id="MF_01315">
    <property type="entry name" value="Ribosomal_uS13"/>
    <property type="match status" value="1"/>
</dbReference>
<dbReference type="InterPro" id="IPR027437">
    <property type="entry name" value="Rbsml_uS13_C"/>
</dbReference>
<dbReference type="InterPro" id="IPR001892">
    <property type="entry name" value="Ribosomal_uS13"/>
</dbReference>
<dbReference type="InterPro" id="IPR010979">
    <property type="entry name" value="Ribosomal_uS13-like_H2TH"/>
</dbReference>
<dbReference type="InterPro" id="IPR019980">
    <property type="entry name" value="Ribosomal_uS13_bac-type"/>
</dbReference>
<dbReference type="InterPro" id="IPR018269">
    <property type="entry name" value="Ribosomal_uS13_CS"/>
</dbReference>
<dbReference type="NCBIfam" id="TIGR03631">
    <property type="entry name" value="uS13_bact"/>
    <property type="match status" value="1"/>
</dbReference>
<dbReference type="PANTHER" id="PTHR10871">
    <property type="entry name" value="30S RIBOSOMAL PROTEIN S13/40S RIBOSOMAL PROTEIN S18"/>
    <property type="match status" value="1"/>
</dbReference>
<dbReference type="PANTHER" id="PTHR10871:SF1">
    <property type="entry name" value="SMALL RIBOSOMAL SUBUNIT PROTEIN US13M"/>
    <property type="match status" value="1"/>
</dbReference>
<dbReference type="Pfam" id="PF00416">
    <property type="entry name" value="Ribosomal_S13"/>
    <property type="match status" value="1"/>
</dbReference>
<dbReference type="PIRSF" id="PIRSF002134">
    <property type="entry name" value="Ribosomal_S13"/>
    <property type="match status" value="1"/>
</dbReference>
<dbReference type="SUPFAM" id="SSF46946">
    <property type="entry name" value="S13-like H2TH domain"/>
    <property type="match status" value="1"/>
</dbReference>
<dbReference type="PROSITE" id="PS00646">
    <property type="entry name" value="RIBOSOMAL_S13_1"/>
    <property type="match status" value="1"/>
</dbReference>
<dbReference type="PROSITE" id="PS50159">
    <property type="entry name" value="RIBOSOMAL_S13_2"/>
    <property type="match status" value="1"/>
</dbReference>
<gene>
    <name evidence="1" type="primary">rpsM</name>
    <name type="ordered locus">Ecok1_32850</name>
    <name type="ORF">APECO1_3149</name>
</gene>
<organism>
    <name type="scientific">Escherichia coli O1:K1 / APEC</name>
    <dbReference type="NCBI Taxonomy" id="405955"/>
    <lineage>
        <taxon>Bacteria</taxon>
        <taxon>Pseudomonadati</taxon>
        <taxon>Pseudomonadota</taxon>
        <taxon>Gammaproteobacteria</taxon>
        <taxon>Enterobacterales</taxon>
        <taxon>Enterobacteriaceae</taxon>
        <taxon>Escherichia</taxon>
    </lineage>
</organism>
<keyword id="KW-1185">Reference proteome</keyword>
<keyword id="KW-0687">Ribonucleoprotein</keyword>
<keyword id="KW-0689">Ribosomal protein</keyword>
<keyword id="KW-0694">RNA-binding</keyword>
<keyword id="KW-0699">rRNA-binding</keyword>
<keyword id="KW-0820">tRNA-binding</keyword>
<sequence length="118" mass="13099">MARIAGINIPDHKHAVIALTSIYGVGKTRSKAILAAAGIAEDVKISELSEGQIDTLRDEVAKFVVEGDLRREISMSIKRLMDLGCYRGLRHRRGLPVRGQRTKTNARTRKGPRKPIKK</sequence>